<gene>
    <name evidence="1" type="primary">E1</name>
</gene>
<comment type="function">
    <text evidence="1">ATP-dependent DNA 3'-5' helicase required for initiation of viral DNA replication. It forms a complex with the viral E2 protein. The E1-E2 complex binds to the replication origin which contains binding sites for both proteins. During the initial step, a dimer of E1 interacts with a dimer of protein E2 leading to a complex that binds the viral origin of replication with high specificity. Then, a second dimer of E1 displaces the E2 dimer in an ATP-dependent manner to form the E1 tetramer. Following this, two E1 monomers are added to each half of the site, which results in the formation of two E1 trimers on the viral ori. Subsequently, two hexamers will be created. The double hexamer acts as a bi-directional helicase machinery and unwinds the viral DNA and then recruits the host DNA polymerase to start replication.</text>
</comment>
<comment type="catalytic activity">
    <reaction evidence="1">
        <text>Couples ATP hydrolysis with the unwinding of duplex DNA by translocating in the 3'-5' direction.</text>
        <dbReference type="EC" id="5.6.2.4"/>
    </reaction>
</comment>
<comment type="catalytic activity">
    <reaction evidence="1">
        <text>ATP + H2O = ADP + phosphate + H(+)</text>
        <dbReference type="Rhea" id="RHEA:13065"/>
        <dbReference type="ChEBI" id="CHEBI:15377"/>
        <dbReference type="ChEBI" id="CHEBI:15378"/>
        <dbReference type="ChEBI" id="CHEBI:30616"/>
        <dbReference type="ChEBI" id="CHEBI:43474"/>
        <dbReference type="ChEBI" id="CHEBI:456216"/>
        <dbReference type="EC" id="5.6.2.4"/>
    </reaction>
</comment>
<comment type="subunit">
    <text evidence="1">Can form hexamers. Interacts with E2 protein; this interaction increases E1 DNA binding specificity. Interacts with host DNA polymerase subunit POLA2. Interacts with host single stranded DNA-binding protein RPA1. Interacts with host TOP1; this interaction stimulates the enzymatic activity of TOP1.</text>
</comment>
<comment type="subcellular location">
    <subcellularLocation>
        <location evidence="1">Host nucleus</location>
    </subcellularLocation>
</comment>
<comment type="PTM">
    <text evidence="1">Phosphorylated.</text>
</comment>
<comment type="PTM">
    <text evidence="1">Sumoylated.</text>
</comment>
<comment type="similarity">
    <text evidence="1">Belongs to the papillomaviridae E1 protein family.</text>
</comment>
<evidence type="ECO:0000255" key="1">
    <source>
        <dbReference type="HAMAP-Rule" id="MF_04000"/>
    </source>
</evidence>
<evidence type="ECO:0000256" key="2">
    <source>
        <dbReference type="SAM" id="MobiDB-lite"/>
    </source>
</evidence>
<dbReference type="EC" id="5.6.2.4" evidence="1"/>
<dbReference type="EMBL" id="X74469">
    <property type="protein sequence ID" value="CAA52514.1"/>
    <property type="molecule type" value="Genomic_DNA"/>
</dbReference>
<dbReference type="EMBL" id="M96319">
    <property type="protein sequence ID" value="AAA47008.1"/>
    <property type="molecule type" value="Genomic_DNA"/>
</dbReference>
<dbReference type="PIR" id="S36481">
    <property type="entry name" value="S36481"/>
</dbReference>
<dbReference type="SMR" id="Q02512"/>
<dbReference type="Proteomes" id="UP000006932">
    <property type="component" value="Genome"/>
</dbReference>
<dbReference type="GO" id="GO:0042025">
    <property type="term" value="C:host cell nucleus"/>
    <property type="evidence" value="ECO:0007669"/>
    <property type="project" value="UniProtKB-SubCell"/>
</dbReference>
<dbReference type="GO" id="GO:0005524">
    <property type="term" value="F:ATP binding"/>
    <property type="evidence" value="ECO:0007669"/>
    <property type="project" value="UniProtKB-UniRule"/>
</dbReference>
<dbReference type="GO" id="GO:0016887">
    <property type="term" value="F:ATP hydrolysis activity"/>
    <property type="evidence" value="ECO:0007669"/>
    <property type="project" value="RHEA"/>
</dbReference>
<dbReference type="GO" id="GO:0003677">
    <property type="term" value="F:DNA binding"/>
    <property type="evidence" value="ECO:0007669"/>
    <property type="project" value="UniProtKB-UniRule"/>
</dbReference>
<dbReference type="GO" id="GO:0003678">
    <property type="term" value="F:DNA helicase activity"/>
    <property type="evidence" value="ECO:0007669"/>
    <property type="project" value="UniProtKB-UniRule"/>
</dbReference>
<dbReference type="GO" id="GO:0006260">
    <property type="term" value="P:DNA replication"/>
    <property type="evidence" value="ECO:0007669"/>
    <property type="project" value="UniProtKB-UniRule"/>
</dbReference>
<dbReference type="Gene3D" id="3.40.1310.10">
    <property type="match status" value="1"/>
</dbReference>
<dbReference type="Gene3D" id="3.40.50.300">
    <property type="entry name" value="P-loop containing nucleotide triphosphate hydrolases"/>
    <property type="match status" value="1"/>
</dbReference>
<dbReference type="Gene3D" id="1.10.10.510">
    <property type="entry name" value="Zinc finger, large T-antigen D1 domain"/>
    <property type="match status" value="1"/>
</dbReference>
<dbReference type="HAMAP" id="MF_04000">
    <property type="entry name" value="PPV_E1"/>
    <property type="match status" value="1"/>
</dbReference>
<dbReference type="InterPro" id="IPR014015">
    <property type="entry name" value="Helicase_SF3_DNA-vir"/>
</dbReference>
<dbReference type="InterPro" id="IPR027417">
    <property type="entry name" value="P-loop_NTPase"/>
</dbReference>
<dbReference type="InterPro" id="IPR001177">
    <property type="entry name" value="PPV_DNA_helicase_E1_C"/>
</dbReference>
<dbReference type="InterPro" id="IPR014000">
    <property type="entry name" value="PPV_DNA_helicase_E1_N"/>
</dbReference>
<dbReference type="InterPro" id="IPR046832">
    <property type="entry name" value="PPV_E1_DBD"/>
</dbReference>
<dbReference type="InterPro" id="IPR046935">
    <property type="entry name" value="PPV_E1_DBD_sf"/>
</dbReference>
<dbReference type="InterPro" id="IPR016393">
    <property type="entry name" value="Rep_E1_papillomaV"/>
</dbReference>
<dbReference type="InterPro" id="IPR037102">
    <property type="entry name" value="Znf_lg_T-Ag_D1_dom_sf"/>
</dbReference>
<dbReference type="Pfam" id="PF00519">
    <property type="entry name" value="PPV_E1_C"/>
    <property type="match status" value="1"/>
</dbReference>
<dbReference type="Pfam" id="PF20450">
    <property type="entry name" value="PPV_E1_DBD"/>
    <property type="match status" value="1"/>
</dbReference>
<dbReference type="Pfam" id="PF00524">
    <property type="entry name" value="PPV_E1_N"/>
    <property type="match status" value="1"/>
</dbReference>
<dbReference type="PIRSF" id="PIRSF003383">
    <property type="entry name" value="Rep_E1_papillomaV"/>
    <property type="match status" value="1"/>
</dbReference>
<dbReference type="SUPFAM" id="SSF55464">
    <property type="entry name" value="Origin of replication-binding domain, RBD-like"/>
    <property type="match status" value="1"/>
</dbReference>
<dbReference type="SUPFAM" id="SSF52540">
    <property type="entry name" value="P-loop containing nucleoside triphosphate hydrolases"/>
    <property type="match status" value="1"/>
</dbReference>
<dbReference type="PROSITE" id="PS51206">
    <property type="entry name" value="SF3_HELICASE_1"/>
    <property type="match status" value="1"/>
</dbReference>
<proteinExistence type="inferred from homology"/>
<organismHost>
    <name type="scientific">Homo sapiens</name>
    <name type="common">Human</name>
    <dbReference type="NCBI Taxonomy" id="9606"/>
</organismHost>
<feature type="chain" id="PRO_0000133115" description="Replication protein E1">
    <location>
        <begin position="1"/>
        <end position="609"/>
    </location>
</feature>
<feature type="domain" description="SF3 helicase" evidence="1">
    <location>
        <begin position="411"/>
        <end position="561"/>
    </location>
</feature>
<feature type="region of interest" description="DNA-binding region" evidence="1">
    <location>
        <begin position="149"/>
        <end position="312"/>
    </location>
</feature>
<feature type="region of interest" description="Disordered" evidence="2">
    <location>
        <begin position="584"/>
        <end position="609"/>
    </location>
</feature>
<feature type="short sequence motif" description="Nuclear localization signal" evidence="1">
    <location>
        <begin position="81"/>
        <end position="83"/>
    </location>
</feature>
<feature type="short sequence motif" description="Nuclear export signal" evidence="1">
    <location>
        <begin position="93"/>
        <end position="102"/>
    </location>
</feature>
<feature type="binding site" evidence="1">
    <location>
        <begin position="437"/>
        <end position="444"/>
    </location>
    <ligand>
        <name>ATP</name>
        <dbReference type="ChEBI" id="CHEBI:30616"/>
    </ligand>
</feature>
<feature type="modified residue" description="Phosphoserine; by host" evidence="1">
    <location>
        <position position="87"/>
    </location>
</feature>
<feature type="modified residue" description="Phosphoserine; by host" evidence="1">
    <location>
        <position position="94"/>
    </location>
</feature>
<feature type="cross-link" description="Glycyl lysine isopeptide (Lys-Gly) (interchain with G-Cter in SUMO)" evidence="1">
    <location>
        <position position="518"/>
    </location>
</feature>
<protein>
    <recommendedName>
        <fullName evidence="1">Replication protein E1</fullName>
        <ecNumber evidence="1">5.6.2.4</ecNumber>
    </recommendedName>
    <alternativeName>
        <fullName evidence="1">ATP-dependent helicase E1</fullName>
    </alternativeName>
    <alternativeName>
        <fullName evidence="1">DNA 3'-5' helicase E1</fullName>
    </alternativeName>
</protein>
<accession>Q02512</accession>
<reference key="1">
    <citation type="journal article" date="1994" name="Curr. Top. Microbiol. Immunol.">
        <title>Primer-directed sequencing of human papillomavirus types.</title>
        <authorList>
            <person name="Delius H."/>
            <person name="Hofmann B."/>
        </authorList>
    </citation>
    <scope>NUCLEOTIDE SEQUENCE [GENOMIC DNA]</scope>
</reference>
<reference key="2">
    <citation type="journal article" date="1992" name="J. Virol.">
        <title>Phylogenetic analysis of 48 papillomavirus types and 28 subtypes and variants: a showcase for the molecular evolution of DNA viruses.</title>
        <authorList>
            <person name="Chan S.-Y."/>
            <person name="Bernard H.U."/>
            <person name="Ong C.K."/>
            <person name="Chan S.P."/>
            <person name="Birgit H."/>
            <person name="Delius H."/>
        </authorList>
    </citation>
    <scope>NUCLEOTIDE SEQUENCE [GENOMIC DNA] OF 336-387</scope>
</reference>
<organism>
    <name type="scientific">Human papillomavirus 17</name>
    <dbReference type="NCBI Taxonomy" id="10607"/>
    <lineage>
        <taxon>Viruses</taxon>
        <taxon>Monodnaviria</taxon>
        <taxon>Shotokuvirae</taxon>
        <taxon>Cossaviricota</taxon>
        <taxon>Papovaviricetes</taxon>
        <taxon>Zurhausenvirales</taxon>
        <taxon>Papillomaviridae</taxon>
        <taxon>Firstpapillomavirinae</taxon>
        <taxon>Betapapillomavirus</taxon>
        <taxon>Betapapillomavirus 2</taxon>
    </lineage>
</organism>
<name>VE1_HPV17</name>
<keyword id="KW-0067">ATP-binding</keyword>
<keyword id="KW-0235">DNA replication</keyword>
<keyword id="KW-0238">DNA-binding</keyword>
<keyword id="KW-0244">Early protein</keyword>
<keyword id="KW-0347">Helicase</keyword>
<keyword id="KW-1048">Host nucleus</keyword>
<keyword id="KW-0378">Hydrolase</keyword>
<keyword id="KW-0413">Isomerase</keyword>
<keyword id="KW-1017">Isopeptide bond</keyword>
<keyword id="KW-0547">Nucleotide-binding</keyword>
<keyword id="KW-0597">Phosphoprotein</keyword>
<keyword id="KW-0832">Ubl conjugation</keyword>
<sequence>MTDDNKGTKFDPKEGCSQWCILEAECSDNSLDGDLEKLFEEGTDTEISDLIDDEDIIQGNSRELLCQQESEESEQQIQLLKRKYLSSQEVLQLSPRLQSITISPQHKSKRRLFERDSGLELSFNEAEDLTQQTLEVQEVSATGSVPAEQGVKGLGIVKDLLKCSNVKAMLLAKFKEAFGVGYMDLTRQYKSSKTCCRDWVVTLYAVQDELIESSKQLLLQHCAYIWLQHMSPMCLYLLCFNVGKSRETVSRLLMNILQVAEVQMLAEPPKLRSMLSALFWYKGSMNPNVYAHGEYPEWILTQTMINHQTAQATQFDLSTMIQFAYDNEYLQEDEIAYHYAKLADTDANARAFLQHNSQARFVKECAIMVRHYKRGEMKEMSISTWVHRKLLVVEGDGHWSDIVKFIRYQDINFIRFLDIFKSFLHNKPKKNCILIHGPPDTGKSMFTMSLIKVLKGKVLSFANCRSNFWLQPLADTKLALIDDVTFVCWDYIDQYLRNGLDGNVVCLDLKHRAPCQIKFPPLLLTSNIDVMKEDKYRYLHSRIQSFAFPNKFPFDNNNMPQFRLTDQSWKSFFERLWHQLDLSDQEEEGDDGQSQRTFQCTAREPNGHL</sequence>